<organism>
    <name type="scientific">Cupriavidus necator (strain ATCC 17699 / DSM 428 / KCTC 22496 / NCIMB 10442 / H16 / Stanier 337)</name>
    <name type="common">Ralstonia eutropha</name>
    <dbReference type="NCBI Taxonomy" id="381666"/>
    <lineage>
        <taxon>Bacteria</taxon>
        <taxon>Pseudomonadati</taxon>
        <taxon>Pseudomonadota</taxon>
        <taxon>Betaproteobacteria</taxon>
        <taxon>Burkholderiales</taxon>
        <taxon>Burkholderiaceae</taxon>
        <taxon>Cupriavidus</taxon>
    </lineage>
</organism>
<comment type="subcellular location">
    <subcellularLocation>
        <location evidence="2">Cell membrane</location>
        <topology evidence="2">Multi-pass membrane protein</topology>
    </subcellularLocation>
</comment>
<comment type="similarity">
    <text evidence="2">Belongs to the SLC13A/DASS transporter (TC 2.A.47) family. DIT1 subfamily.</text>
</comment>
<proteinExistence type="inferred from homology"/>
<evidence type="ECO:0000255" key="1"/>
<evidence type="ECO:0000305" key="2"/>
<keyword id="KW-1003">Cell membrane</keyword>
<keyword id="KW-0472">Membrane</keyword>
<keyword id="KW-1185">Reference proteome</keyword>
<keyword id="KW-0677">Repeat</keyword>
<keyword id="KW-0812">Transmembrane</keyword>
<keyword id="KW-1133">Transmembrane helix</keyword>
<protein>
    <recommendedName>
        <fullName>Membrane protein</fullName>
    </recommendedName>
</protein>
<dbReference type="EMBL" id="Z22737">
    <property type="protein sequence ID" value="CAA80431.1"/>
    <property type="molecule type" value="Genomic_DNA"/>
</dbReference>
<dbReference type="EMBL" id="AM260479">
    <property type="protein sequence ID" value="CAJ91815.1"/>
    <property type="molecule type" value="Genomic_DNA"/>
</dbReference>
<dbReference type="PIR" id="I39534">
    <property type="entry name" value="I39534"/>
</dbReference>
<dbReference type="RefSeq" id="WP_011614642.1">
    <property type="nucleotide sequence ID" value="NC_008313.1"/>
</dbReference>
<dbReference type="SMR" id="Q07252"/>
<dbReference type="STRING" id="381666.H16_A0667"/>
<dbReference type="KEGG" id="reh:H16_A0667"/>
<dbReference type="eggNOG" id="COG0471">
    <property type="taxonomic scope" value="Bacteria"/>
</dbReference>
<dbReference type="HOGENOM" id="CLU_005170_0_1_4"/>
<dbReference type="OrthoDB" id="9766267at2"/>
<dbReference type="Proteomes" id="UP000008210">
    <property type="component" value="Chromosome 1"/>
</dbReference>
<dbReference type="GO" id="GO:0005886">
    <property type="term" value="C:plasma membrane"/>
    <property type="evidence" value="ECO:0007669"/>
    <property type="project" value="UniProtKB-SubCell"/>
</dbReference>
<dbReference type="GO" id="GO:0008514">
    <property type="term" value="F:organic anion transmembrane transporter activity"/>
    <property type="evidence" value="ECO:0007669"/>
    <property type="project" value="UniProtKB-ARBA"/>
</dbReference>
<dbReference type="GO" id="GO:1905039">
    <property type="term" value="P:carboxylic acid transmembrane transport"/>
    <property type="evidence" value="ECO:0007669"/>
    <property type="project" value="UniProtKB-ARBA"/>
</dbReference>
<dbReference type="InterPro" id="IPR030676">
    <property type="entry name" value="CitT-rel"/>
</dbReference>
<dbReference type="InterPro" id="IPR001898">
    <property type="entry name" value="SLC13A/DASS"/>
</dbReference>
<dbReference type="NCBIfam" id="TIGR00785">
    <property type="entry name" value="dass"/>
    <property type="match status" value="1"/>
</dbReference>
<dbReference type="PANTHER" id="PTHR10283">
    <property type="entry name" value="SOLUTE CARRIER FAMILY 13 MEMBER"/>
    <property type="match status" value="1"/>
</dbReference>
<dbReference type="PANTHER" id="PTHR10283:SF82">
    <property type="entry name" value="SOLUTE CARRIER FAMILY 13 MEMBER 2"/>
    <property type="match status" value="1"/>
</dbReference>
<dbReference type="Pfam" id="PF00939">
    <property type="entry name" value="Na_sulph_symp"/>
    <property type="match status" value="1"/>
</dbReference>
<dbReference type="PIRSF" id="PIRSF002457">
    <property type="entry name" value="DASS"/>
    <property type="match status" value="1"/>
</dbReference>
<accession>Q07252</accession>
<accession>Q0KDV6</accession>
<name>MEMP_CUPNH</name>
<reference key="1">
    <citation type="journal article" date="1993" name="FEMS Microbiol. Lett.">
        <title>The Alcaligenes eutrophus ldh structural gene encodes a novel type of lactate dehydrogenase.</title>
        <authorList>
            <person name="Jendrossek D."/>
            <person name="Kratzin H.D."/>
            <person name="Steinbuechel A."/>
        </authorList>
    </citation>
    <scope>NUCLEOTIDE SEQUENCE [GENOMIC DNA]</scope>
</reference>
<reference key="2">
    <citation type="journal article" date="2006" name="Nat. Biotechnol.">
        <title>Genome sequence of the bioplastic-producing 'Knallgas' bacterium Ralstonia eutropha H16.</title>
        <authorList>
            <person name="Pohlmann A."/>
            <person name="Fricke W.F."/>
            <person name="Reinecke F."/>
            <person name="Kusian B."/>
            <person name="Liesegang H."/>
            <person name="Cramm R."/>
            <person name="Eitinger T."/>
            <person name="Ewering C."/>
            <person name="Poetter M."/>
            <person name="Schwartz E."/>
            <person name="Strittmatter A."/>
            <person name="Voss I."/>
            <person name="Gottschalk G."/>
            <person name="Steinbuechel A."/>
            <person name="Friedrich B."/>
            <person name="Bowien B."/>
        </authorList>
    </citation>
    <scope>NUCLEOTIDE SEQUENCE [LARGE SCALE GENOMIC DNA]</scope>
    <source>
        <strain>ATCC 17699 / DSM 428 / KCTC 22496 / NCIMB 10442 / H16 / Stanier 337</strain>
    </source>
</reference>
<sequence length="513" mass="53620">MTDTSASPPSAPSAPSAPSAAAAQAVVPAPKLTLHWGLFAAVAALLVVLAIPQPEGLTVAGQRMLAILAFAIVVWITEAVSYETSAIMITSLMAGLIGFAPTVNDPSVQYGTSKALGMALAGFSNTALALVAAALFISAAMTVTGLDRRIALVTLSAIGTSTRRILIGTIAVTIALSLVVPSATARSACVVPIMMGVIAAFGVDKKSNIAAGIMITVAQATSIWNVGIQTAAAQNLLTVGFMDKLLGERITWLQWLIAGAPWAIAMSVVLYFLVRLLLPAETDAIPGGKEAVQRELSALGPMSAPQKRLAAVSLGLLLFWATEGKLHSFDTATVTFVGLVILMMPRIGVMDWKTMQQRTPWGTLIVFGVGISLGTALLSTNAGQWLGQFVVTHSGLAAHGALLVFAILSAFLILIHLGFASATALTAALLPILIAVLQTLPGDINRVGMTMLLGFTVSFGFILPINAPQNMVCLGTETFNGRQFARIGIPVTIIGYAMMLLFAATYWRWLGWV</sequence>
<gene>
    <name type="ordered locus">H16_A0667</name>
</gene>
<feature type="chain" id="PRO_0000172520" description="Membrane protein">
    <location>
        <begin position="1"/>
        <end position="513"/>
    </location>
</feature>
<feature type="transmembrane region" description="Helical" evidence="1">
    <location>
        <begin position="32"/>
        <end position="52"/>
    </location>
</feature>
<feature type="transmembrane region" description="Helical" evidence="1">
    <location>
        <begin position="56"/>
        <end position="76"/>
    </location>
</feature>
<feature type="transmembrane region" description="Helical" evidence="1">
    <location>
        <begin position="79"/>
        <end position="99"/>
    </location>
</feature>
<feature type="transmembrane region" description="Helical" evidence="1">
    <location>
        <begin position="126"/>
        <end position="146"/>
    </location>
</feature>
<feature type="transmembrane region" description="Helical" evidence="1">
    <location>
        <begin position="165"/>
        <end position="185"/>
    </location>
</feature>
<feature type="transmembrane region" description="Helical" evidence="1">
    <location>
        <begin position="208"/>
        <end position="228"/>
    </location>
</feature>
<feature type="transmembrane region" description="Helical" evidence="1">
    <location>
        <begin position="254"/>
        <end position="274"/>
    </location>
</feature>
<feature type="transmembrane region" description="Helical" evidence="1">
    <location>
        <begin position="309"/>
        <end position="329"/>
    </location>
</feature>
<feature type="transmembrane region" description="Helical" evidence="1">
    <location>
        <begin position="332"/>
        <end position="352"/>
    </location>
</feature>
<feature type="transmembrane region" description="Helical" evidence="1">
    <location>
        <begin position="360"/>
        <end position="380"/>
    </location>
</feature>
<feature type="transmembrane region" description="Helical" evidence="1">
    <location>
        <begin position="400"/>
        <end position="420"/>
    </location>
</feature>
<feature type="transmembrane region" description="Helical" evidence="1">
    <location>
        <begin position="422"/>
        <end position="442"/>
    </location>
</feature>
<feature type="transmembrane region" description="Helical" evidence="1">
    <location>
        <begin position="447"/>
        <end position="467"/>
    </location>
</feature>
<feature type="transmembrane region" description="Helical" evidence="1">
    <location>
        <begin position="487"/>
        <end position="507"/>
    </location>
</feature>
<feature type="repeat" description="1">
    <location>
        <begin position="9"/>
        <end position="11"/>
    </location>
</feature>
<feature type="repeat" description="2">
    <location>
        <begin position="12"/>
        <end position="14"/>
    </location>
</feature>
<feature type="repeat" description="3">
    <location>
        <begin position="15"/>
        <end position="17"/>
    </location>
</feature>
<feature type="repeat" description="4">
    <location>
        <begin position="18"/>
        <end position="20"/>
    </location>
</feature>
<feature type="region of interest" description="4 X 3 AA tandem repeats of P-S-A">
    <location>
        <begin position="9"/>
        <end position="20"/>
    </location>
</feature>
<feature type="sequence conflict" description="In Ref. 1; CAA80431." evidence="2" ref="1">
    <original>V</original>
    <variation>L</variation>
    <location>
        <position position="74"/>
    </location>
</feature>